<keyword id="KW-0963">Cytoplasm</keyword>
<keyword id="KW-0255">Endonuclease</keyword>
<keyword id="KW-0378">Hydrolase</keyword>
<keyword id="KW-0479">Metal-binding</keyword>
<keyword id="KW-0540">Nuclease</keyword>
<keyword id="KW-1185">Reference proteome</keyword>
<keyword id="KW-0690">Ribosome biogenesis</keyword>
<keyword id="KW-0698">rRNA processing</keyword>
<keyword id="KW-0862">Zinc</keyword>
<proteinExistence type="inferred from homology"/>
<evidence type="ECO:0000255" key="1">
    <source>
        <dbReference type="HAMAP-Rule" id="MF_00009"/>
    </source>
</evidence>
<evidence type="ECO:0000256" key="2">
    <source>
        <dbReference type="SAM" id="MobiDB-lite"/>
    </source>
</evidence>
<dbReference type="EC" id="3.1.-.-" evidence="1"/>
<dbReference type="EMBL" id="CP000082">
    <property type="protein sequence ID" value="AAZ18485.1"/>
    <property type="molecule type" value="Genomic_DNA"/>
</dbReference>
<dbReference type="RefSeq" id="WP_011279914.1">
    <property type="nucleotide sequence ID" value="NC_007204.1"/>
</dbReference>
<dbReference type="SMR" id="Q4FU23"/>
<dbReference type="STRING" id="259536.Psyc_0626"/>
<dbReference type="KEGG" id="par:Psyc_0626"/>
<dbReference type="eggNOG" id="COG0319">
    <property type="taxonomic scope" value="Bacteria"/>
</dbReference>
<dbReference type="HOGENOM" id="CLU_106710_0_2_6"/>
<dbReference type="OrthoDB" id="9807740at2"/>
<dbReference type="Proteomes" id="UP000000546">
    <property type="component" value="Chromosome"/>
</dbReference>
<dbReference type="GO" id="GO:0005737">
    <property type="term" value="C:cytoplasm"/>
    <property type="evidence" value="ECO:0007669"/>
    <property type="project" value="UniProtKB-SubCell"/>
</dbReference>
<dbReference type="GO" id="GO:0004222">
    <property type="term" value="F:metalloendopeptidase activity"/>
    <property type="evidence" value="ECO:0007669"/>
    <property type="project" value="InterPro"/>
</dbReference>
<dbReference type="GO" id="GO:0004521">
    <property type="term" value="F:RNA endonuclease activity"/>
    <property type="evidence" value="ECO:0007669"/>
    <property type="project" value="UniProtKB-UniRule"/>
</dbReference>
<dbReference type="GO" id="GO:0008270">
    <property type="term" value="F:zinc ion binding"/>
    <property type="evidence" value="ECO:0007669"/>
    <property type="project" value="UniProtKB-UniRule"/>
</dbReference>
<dbReference type="GO" id="GO:0006364">
    <property type="term" value="P:rRNA processing"/>
    <property type="evidence" value="ECO:0007669"/>
    <property type="project" value="UniProtKB-UniRule"/>
</dbReference>
<dbReference type="Gene3D" id="3.40.390.30">
    <property type="entry name" value="Metalloproteases ('zincins'), catalytic domain"/>
    <property type="match status" value="1"/>
</dbReference>
<dbReference type="HAMAP" id="MF_00009">
    <property type="entry name" value="Endoribonucl_YbeY"/>
    <property type="match status" value="1"/>
</dbReference>
<dbReference type="InterPro" id="IPR023091">
    <property type="entry name" value="MetalPrtase_cat_dom_sf_prd"/>
</dbReference>
<dbReference type="InterPro" id="IPR002036">
    <property type="entry name" value="YbeY"/>
</dbReference>
<dbReference type="InterPro" id="IPR020549">
    <property type="entry name" value="YbeY_CS"/>
</dbReference>
<dbReference type="NCBIfam" id="TIGR00043">
    <property type="entry name" value="rRNA maturation RNase YbeY"/>
    <property type="match status" value="1"/>
</dbReference>
<dbReference type="PANTHER" id="PTHR46986">
    <property type="entry name" value="ENDORIBONUCLEASE YBEY, CHLOROPLASTIC"/>
    <property type="match status" value="1"/>
</dbReference>
<dbReference type="PANTHER" id="PTHR46986:SF1">
    <property type="entry name" value="ENDORIBONUCLEASE YBEY, CHLOROPLASTIC"/>
    <property type="match status" value="1"/>
</dbReference>
<dbReference type="Pfam" id="PF02130">
    <property type="entry name" value="YbeY"/>
    <property type="match status" value="1"/>
</dbReference>
<dbReference type="SUPFAM" id="SSF55486">
    <property type="entry name" value="Metalloproteases ('zincins'), catalytic domain"/>
    <property type="match status" value="1"/>
</dbReference>
<dbReference type="PROSITE" id="PS01306">
    <property type="entry name" value="UPF0054"/>
    <property type="match status" value="1"/>
</dbReference>
<sequence length="206" mass="23450">MSQANHNDTHNNIDDNINNHFNDSESLDTLDISASDNIDDEVLDGFYHREQLLSVMMATLDYIDERVKKGLILPYFDDIDTEQWQEKIKALDIYITDEDEGRELNLEARQKDYATNILSYPSDLPAAIIGLMPTLPLGELVICHAVMVREAAEQNKAAVQHINHLLVHGILHLLGFDHELGQAEQDEMERFEIEILAGLNIPNPYN</sequence>
<comment type="function">
    <text evidence="1">Single strand-specific metallo-endoribonuclease involved in late-stage 70S ribosome quality control and in maturation of the 3' terminus of the 16S rRNA.</text>
</comment>
<comment type="cofactor">
    <cofactor evidence="1">
        <name>Zn(2+)</name>
        <dbReference type="ChEBI" id="CHEBI:29105"/>
    </cofactor>
    <text evidence="1">Binds 1 zinc ion.</text>
</comment>
<comment type="subcellular location">
    <subcellularLocation>
        <location evidence="1">Cytoplasm</location>
    </subcellularLocation>
</comment>
<comment type="similarity">
    <text evidence="1">Belongs to the endoribonuclease YbeY family.</text>
</comment>
<name>YBEY_PSYA2</name>
<accession>Q4FU23</accession>
<feature type="chain" id="PRO_0000284281" description="Endoribonuclease YbeY">
    <location>
        <begin position="1"/>
        <end position="206"/>
    </location>
</feature>
<feature type="region of interest" description="Disordered" evidence="2">
    <location>
        <begin position="1"/>
        <end position="20"/>
    </location>
</feature>
<feature type="binding site" evidence="1">
    <location>
        <position position="168"/>
    </location>
    <ligand>
        <name>Zn(2+)</name>
        <dbReference type="ChEBI" id="CHEBI:29105"/>
        <note>catalytic</note>
    </ligand>
</feature>
<feature type="binding site" evidence="1">
    <location>
        <position position="172"/>
    </location>
    <ligand>
        <name>Zn(2+)</name>
        <dbReference type="ChEBI" id="CHEBI:29105"/>
        <note>catalytic</note>
    </ligand>
</feature>
<feature type="binding site" evidence="1">
    <location>
        <position position="178"/>
    </location>
    <ligand>
        <name>Zn(2+)</name>
        <dbReference type="ChEBI" id="CHEBI:29105"/>
        <note>catalytic</note>
    </ligand>
</feature>
<gene>
    <name evidence="1" type="primary">ybeY</name>
    <name type="ordered locus">Psyc_0626</name>
</gene>
<reference key="1">
    <citation type="journal article" date="2010" name="Appl. Environ. Microbiol.">
        <title>The genome sequence of Psychrobacter arcticus 273-4, a psychroactive Siberian permafrost bacterium, reveals mechanisms for adaptation to low-temperature growth.</title>
        <authorList>
            <person name="Ayala-del-Rio H.L."/>
            <person name="Chain P.S."/>
            <person name="Grzymski J.J."/>
            <person name="Ponder M.A."/>
            <person name="Ivanova N."/>
            <person name="Bergholz P.W."/>
            <person name="Di Bartolo G."/>
            <person name="Hauser L."/>
            <person name="Land M."/>
            <person name="Bakermans C."/>
            <person name="Rodrigues D."/>
            <person name="Klappenbach J."/>
            <person name="Zarka D."/>
            <person name="Larimer F."/>
            <person name="Richardson P."/>
            <person name="Murray A."/>
            <person name="Thomashow M."/>
            <person name="Tiedje J.M."/>
        </authorList>
    </citation>
    <scope>NUCLEOTIDE SEQUENCE [LARGE SCALE GENOMIC DNA]</scope>
    <source>
        <strain>DSM 17307 / VKM B-2377 / 273-4</strain>
    </source>
</reference>
<protein>
    <recommendedName>
        <fullName evidence="1">Endoribonuclease YbeY</fullName>
        <ecNumber evidence="1">3.1.-.-</ecNumber>
    </recommendedName>
</protein>
<organism>
    <name type="scientific">Psychrobacter arcticus (strain DSM 17307 / VKM B-2377 / 273-4)</name>
    <dbReference type="NCBI Taxonomy" id="259536"/>
    <lineage>
        <taxon>Bacteria</taxon>
        <taxon>Pseudomonadati</taxon>
        <taxon>Pseudomonadota</taxon>
        <taxon>Gammaproteobacteria</taxon>
        <taxon>Moraxellales</taxon>
        <taxon>Moraxellaceae</taxon>
        <taxon>Psychrobacter</taxon>
    </lineage>
</organism>